<keyword id="KW-1185">Reference proteome</keyword>
<sequence>MGESKSPQESSSEGETKRKFREALDRKMAQSSSGSDHKDGGGKQSRAHGPVASRREFRRKSG</sequence>
<evidence type="ECO:0000256" key="1">
    <source>
        <dbReference type="SAM" id="MobiDB-lite"/>
    </source>
</evidence>
<evidence type="ECO:0000305" key="2"/>
<gene>
    <name evidence="2" type="ordered locus">Rv1155A</name>
</gene>
<name>Y155A_MYCTU</name>
<protein>
    <recommendedName>
        <fullName evidence="2">Uncharacterized protein Rv1155A</fullName>
    </recommendedName>
</protein>
<proteinExistence type="evidence at protein level"/>
<dbReference type="EMBL" id="AL123456">
    <property type="status" value="NOT_ANNOTATED_CDS"/>
    <property type="molecule type" value="Genomic_DNA"/>
</dbReference>
<dbReference type="RefSeq" id="WP_003406063.1">
    <property type="nucleotide sequence ID" value="NZ_NVQJ01000025.1"/>
</dbReference>
<dbReference type="RefSeq" id="YP_009030031.1">
    <property type="nucleotide sequence ID" value="NC_000962.3"/>
</dbReference>
<dbReference type="GeneID" id="19394672"/>
<dbReference type="KEGG" id="mtu:Rv1155a"/>
<dbReference type="PATRIC" id="fig|83332.293.peg.1295"/>
<dbReference type="HOGENOM" id="CLU_186976_2_1_11"/>
<dbReference type="InParanoid" id="A0A089QKZ7"/>
<dbReference type="Proteomes" id="UP000001584">
    <property type="component" value="Chromosome"/>
</dbReference>
<dbReference type="InterPro" id="IPR035172">
    <property type="entry name" value="DUF5302"/>
</dbReference>
<dbReference type="Pfam" id="PF17227">
    <property type="entry name" value="DUF5302"/>
    <property type="match status" value="1"/>
</dbReference>
<reference key="1">
    <citation type="journal article" date="1998" name="Nature">
        <title>Deciphering the biology of Mycobacterium tuberculosis from the complete genome sequence.</title>
        <authorList>
            <person name="Cole S.T."/>
            <person name="Brosch R."/>
            <person name="Parkhill J."/>
            <person name="Garnier T."/>
            <person name="Churcher C.M."/>
            <person name="Harris D.E."/>
            <person name="Gordon S.V."/>
            <person name="Eiglmeier K."/>
            <person name="Gas S."/>
            <person name="Barry C.E. III"/>
            <person name="Tekaia F."/>
            <person name="Badcock K."/>
            <person name="Basham D."/>
            <person name="Brown D."/>
            <person name="Chillingworth T."/>
            <person name="Connor R."/>
            <person name="Davies R.M."/>
            <person name="Devlin K."/>
            <person name="Feltwell T."/>
            <person name="Gentles S."/>
            <person name="Hamlin N."/>
            <person name="Holroyd S."/>
            <person name="Hornsby T."/>
            <person name="Jagels K."/>
            <person name="Krogh A."/>
            <person name="McLean J."/>
            <person name="Moule S."/>
            <person name="Murphy L.D."/>
            <person name="Oliver S."/>
            <person name="Osborne J."/>
            <person name="Quail M.A."/>
            <person name="Rajandream M.A."/>
            <person name="Rogers J."/>
            <person name="Rutter S."/>
            <person name="Seeger K."/>
            <person name="Skelton S."/>
            <person name="Squares S."/>
            <person name="Squares R."/>
            <person name="Sulston J.E."/>
            <person name="Taylor K."/>
            <person name="Whitehead S."/>
            <person name="Barrell B.G."/>
        </authorList>
    </citation>
    <scope>NUCLEOTIDE SEQUENCE [LARGE SCALE GENOMIC DNA]</scope>
    <source>
        <strain>ATCC 25618 / H37Rv</strain>
    </source>
</reference>
<reference key="2">
    <citation type="journal article" date="2011" name="Mol. Cell. Proteomics">
        <title>Proteogenomic analysis of Mycobacterium tuberculosis by high resolution mass spectrometry.</title>
        <authorList>
            <person name="Kelkar D.S."/>
            <person name="Kumar D."/>
            <person name="Kumar P."/>
            <person name="Balakrishnan L."/>
            <person name="Muthusamy B."/>
            <person name="Yadav A.K."/>
            <person name="Shrivastava P."/>
            <person name="Marimuthu A."/>
            <person name="Anand S."/>
            <person name="Sundaram H."/>
            <person name="Kingsbury R."/>
            <person name="Harsha H.C."/>
            <person name="Nair B."/>
            <person name="Prasad T.S."/>
            <person name="Chauhan D.S."/>
            <person name="Katoch K."/>
            <person name="Katoch V.M."/>
            <person name="Kumar P."/>
            <person name="Chaerkady R."/>
            <person name="Ramachandran S."/>
            <person name="Dash D."/>
            <person name="Pandey A."/>
        </authorList>
    </citation>
    <scope>IDENTIFICATION BY MASS SPECTROMETRY [LARGE SCALE ANALYSIS]</scope>
    <source>
        <strain>ATCC 25618 / H37Rv</strain>
    </source>
</reference>
<organism>
    <name type="scientific">Mycobacterium tuberculosis (strain ATCC 25618 / H37Rv)</name>
    <dbReference type="NCBI Taxonomy" id="83332"/>
    <lineage>
        <taxon>Bacteria</taxon>
        <taxon>Bacillati</taxon>
        <taxon>Actinomycetota</taxon>
        <taxon>Actinomycetes</taxon>
        <taxon>Mycobacteriales</taxon>
        <taxon>Mycobacteriaceae</taxon>
        <taxon>Mycobacterium</taxon>
        <taxon>Mycobacterium tuberculosis complex</taxon>
    </lineage>
</organism>
<accession>A0A089QKZ7</accession>
<feature type="chain" id="PRO_0000434780" description="Uncharacterized protein Rv1155A">
    <location>
        <begin position="1"/>
        <end position="62"/>
    </location>
</feature>
<feature type="region of interest" description="Disordered" evidence="1">
    <location>
        <begin position="1"/>
        <end position="62"/>
    </location>
</feature>
<feature type="compositionally biased region" description="Polar residues" evidence="1">
    <location>
        <begin position="1"/>
        <end position="13"/>
    </location>
</feature>
<feature type="compositionally biased region" description="Basic and acidic residues" evidence="1">
    <location>
        <begin position="14"/>
        <end position="28"/>
    </location>
</feature>